<evidence type="ECO:0000250" key="1">
    <source>
        <dbReference type="UniProtKB" id="A6T923"/>
    </source>
</evidence>
<evidence type="ECO:0000250" key="2">
    <source>
        <dbReference type="UniProtKB" id="B8M9J8"/>
    </source>
</evidence>
<evidence type="ECO:0000250" key="3">
    <source>
        <dbReference type="UniProtKB" id="L0E4H0"/>
    </source>
</evidence>
<evidence type="ECO:0000269" key="4">
    <source>
    </source>
</evidence>
<evidence type="ECO:0000269" key="5">
    <source>
    </source>
</evidence>
<evidence type="ECO:0000269" key="6">
    <source>
    </source>
</evidence>
<evidence type="ECO:0000303" key="7">
    <source>
    </source>
</evidence>
<evidence type="ECO:0000305" key="8"/>
<evidence type="ECO:0000305" key="9">
    <source>
    </source>
</evidence>
<organism>
    <name type="scientific">Aspergillus sp. (strain MF297-2)</name>
    <dbReference type="NCBI Taxonomy" id="877550"/>
    <lineage>
        <taxon>Eukaryota</taxon>
        <taxon>Fungi</taxon>
        <taxon>Dikarya</taxon>
        <taxon>Ascomycota</taxon>
        <taxon>Pezizomycotina</taxon>
        <taxon>Eurotiomycetes</taxon>
        <taxon>Eurotiomycetidae</taxon>
        <taxon>Eurotiales</taxon>
        <taxon>Aspergillaceae</taxon>
        <taxon>Aspergillus</taxon>
    </lineage>
</organism>
<keyword id="KW-0017">Alkaloid metabolism</keyword>
<keyword id="KW-0274">FAD</keyword>
<keyword id="KW-0285">Flavoprotein</keyword>
<keyword id="KW-0503">Monooxygenase</keyword>
<keyword id="KW-0560">Oxidoreductase</keyword>
<gene>
    <name evidence="7" type="primary">notI</name>
</gene>
<feature type="chain" id="PRO_0000448804" description="FAD-dependent monooxygenase notI">
    <location>
        <begin position="1"/>
        <end position="433"/>
    </location>
</feature>
<feature type="active site" evidence="3">
    <location>
        <position position="195"/>
    </location>
</feature>
<feature type="binding site" evidence="2">
    <location>
        <position position="45"/>
    </location>
    <ligand>
        <name>FAD</name>
        <dbReference type="ChEBI" id="CHEBI:57692"/>
    </ligand>
</feature>
<feature type="binding site" evidence="2">
    <location>
        <position position="117"/>
    </location>
    <ligand>
        <name>FAD</name>
        <dbReference type="ChEBI" id="CHEBI:57692"/>
    </ligand>
</feature>
<feature type="binding site" evidence="2">
    <location>
        <position position="314"/>
    </location>
    <ligand>
        <name>FAD</name>
        <dbReference type="ChEBI" id="CHEBI:57692"/>
    </ligand>
</feature>
<feature type="binding site" evidence="2">
    <location>
        <position position="327"/>
    </location>
    <ligand>
        <name>FAD</name>
        <dbReference type="ChEBI" id="CHEBI:57692"/>
    </ligand>
</feature>
<dbReference type="EC" id="1.-.-.-" evidence="9"/>
<dbReference type="EMBL" id="HM622670">
    <property type="protein sequence ID" value="ADM34142.1"/>
    <property type="molecule type" value="Genomic_DNA"/>
</dbReference>
<dbReference type="SMR" id="E1ACQ4"/>
<dbReference type="GO" id="GO:0071949">
    <property type="term" value="F:FAD binding"/>
    <property type="evidence" value="ECO:0007669"/>
    <property type="project" value="InterPro"/>
</dbReference>
<dbReference type="GO" id="GO:0004497">
    <property type="term" value="F:monooxygenase activity"/>
    <property type="evidence" value="ECO:0007669"/>
    <property type="project" value="UniProtKB-KW"/>
</dbReference>
<dbReference type="GO" id="GO:0009820">
    <property type="term" value="P:alkaloid metabolic process"/>
    <property type="evidence" value="ECO:0007669"/>
    <property type="project" value="UniProtKB-KW"/>
</dbReference>
<dbReference type="Gene3D" id="3.50.50.60">
    <property type="entry name" value="FAD/NAD(P)-binding domain"/>
    <property type="match status" value="1"/>
</dbReference>
<dbReference type="InterPro" id="IPR002938">
    <property type="entry name" value="FAD-bd"/>
</dbReference>
<dbReference type="InterPro" id="IPR050493">
    <property type="entry name" value="FAD-dep_Monooxygenase_BioMet"/>
</dbReference>
<dbReference type="InterPro" id="IPR036188">
    <property type="entry name" value="FAD/NAD-bd_sf"/>
</dbReference>
<dbReference type="PANTHER" id="PTHR13789">
    <property type="entry name" value="MONOOXYGENASE"/>
    <property type="match status" value="1"/>
</dbReference>
<dbReference type="PANTHER" id="PTHR13789:SF236">
    <property type="entry name" value="MONOOXYGENASE, PUTATIVE (AFU_ORTHOLOGUE AFUA_6G12060)-RELATED"/>
    <property type="match status" value="1"/>
</dbReference>
<dbReference type="Pfam" id="PF01494">
    <property type="entry name" value="FAD_binding_3"/>
    <property type="match status" value="1"/>
</dbReference>
<dbReference type="PRINTS" id="PR00420">
    <property type="entry name" value="RNGMNOXGNASE"/>
</dbReference>
<dbReference type="SUPFAM" id="SSF51905">
    <property type="entry name" value="FAD/NAD(P)-binding domain"/>
    <property type="match status" value="1"/>
</dbReference>
<protein>
    <recommendedName>
        <fullName evidence="7">FAD-dependent monooxygenase notI</fullName>
        <ecNumber evidence="9">1.-.-.-</ecNumber>
    </recommendedName>
    <alternativeName>
        <fullName evidence="7">Notoamide biosynthesis cluster protein I</fullName>
    </alternativeName>
</protein>
<reference key="1">
    <citation type="journal article" date="2010" name="J. Am. Chem. Soc.">
        <title>Genome-based characterization of two prenylation steps in the assembly of the stephacidin and notoamide anticancer agents in a marine-derived Aspergillus sp.</title>
        <authorList>
            <person name="Ding Y."/>
            <person name="de Wet J.R."/>
            <person name="Cavalcoli J."/>
            <person name="Li S."/>
            <person name="Greshock T.J."/>
            <person name="Miller K.A."/>
            <person name="Finefield J.M."/>
            <person name="Sunderhaus J.D."/>
            <person name="McAfoos T.J."/>
            <person name="Tsukamoto S."/>
            <person name="Williams R.M."/>
            <person name="Sherman D.H."/>
        </authorList>
    </citation>
    <scope>NUCLEOTIDE SEQUENCE [GENOMIC DNA]</scope>
    <scope>FUNCTION</scope>
    <source>
        <strain>MF297-2</strain>
    </source>
</reference>
<reference key="2">
    <citation type="journal article" date="2007" name="Angew. Chem. Int. Ed.">
        <title>Notoamides A-D: prenylated indole alkaloids isolated from a marine-derived fungus, Aspergillus sp.</title>
        <authorList>
            <person name="Kato H."/>
            <person name="Yoshida T."/>
            <person name="Tokue T."/>
            <person name="Nojiri Y."/>
            <person name="Hirota H."/>
            <person name="Ohta T."/>
            <person name="Williams R.M."/>
            <person name="Tsukamoto S."/>
        </authorList>
    </citation>
    <scope>BIOTECHNOLOGY</scope>
</reference>
<reference key="3">
    <citation type="journal article" date="2012" name="J. Am. Chem. Soc.">
        <title>Biochemical characterization of NotB as an FAD-dependent oxidase in the biosynthesis of notoamide indole alkaloids.</title>
        <authorList>
            <person name="Li S."/>
            <person name="Finefield J.M."/>
            <person name="Sunderhaus J.D."/>
            <person name="McAfoos T.J."/>
            <person name="Williams R.M."/>
            <person name="Sherman D.H."/>
        </authorList>
    </citation>
    <scope>FUNCTION</scope>
</reference>
<reference key="4">
    <citation type="journal article" date="2012" name="Med. Chem. Commun.">
        <title>Comparative analysis of the biosynthetic systems for fungal bicyclo[2.2.2]diazaoctane indole alkaloids: the (+)/(-)-notoamide, paraherquamide and malbrancheamide pathways.</title>
        <authorList>
            <person name="Li S."/>
            <person name="Anand K."/>
            <person name="Tran H."/>
            <person name="Yu F."/>
            <person name="Finefield J.M."/>
            <person name="Sunderhaus J.D."/>
            <person name="McAfoos T.J."/>
            <person name="Tsukamoto S."/>
            <person name="Williams R.M."/>
            <person name="Sherman D.H."/>
        </authorList>
    </citation>
    <scope>FUNCTION</scope>
    <scope>PATHWAY</scope>
</reference>
<proteinExistence type="evidence at protein level"/>
<comment type="function">
    <text evidence="5 6 9">FAD-dependent monooxygenase; part of the gene cluster that mediates the biosynthesis of notoamide, a fungal indole alkaloid that belongs to a family of natural products containing a characteristic bicyclo[2.2.2]diazaoctane core (PubMed:20722388). The first step of notoamide biosynthesis involves coupling of L-proline and L-tryptophan by the bimodular NRPS notE, to produce cyclo-L-tryptophan-L-proline called brevianamide F (PubMed:20722388). The reverse prenyltransferase notF then acts as a deoxybrevianamide E synthase and converts brevianamide F to deoxybrevianamide E via reverse prenylation at C-2 of the indole ring leading to the bicyclo[2.2.2]diazaoctane core (PubMed:20722388). Deoxybrevianamide E is further hydroxylated at C-6 of the indole ring, likely catalyzed by the cytochrome P450 monooxygenase notG, to yield 6-hydroxy-deoxybrevianamide E (Probable). 6-hydroxy-deoxybrevianamide E is a specific substrate of the prenyltransferase notC for normal prenylation at C-7 to produce 6-hydroxy-7-prenyl-deoxybrevianamide, also called notoamide S (PubMed:20722388). As the proposed pivotal branching point in notoamide biosynthesis, notoamide S can be diverted to notoamide E through an oxidative pyran ring closure putatively catalyzed by either notH cytochrome P450 monooxygenase or the notD FAD-linked oxidoreductase (Probable). This step would be followed by an indole 2,3-epoxidation-initiated pinacol-like rearrangement catalyzed by the notB FAD-dependent monooxygenase leading to the formation of notoamide C and notoamide D (PubMed:22188465). On the other hand notoamide S is converted to notoamide T by notH (or notD), a bifunctional oxidase that also functions as the intramolecular Diels-Alderase responsible for generation of (+)-notoamide T (Probable). To generate antipodal (-)-notoaminide T, notH' (or notD') in Aspergillus versicolor is expected to catalyze a Diels-Alder reaction leading to the opposite stereochemistry (Probable). The remaining oxidoreductase notD (or notH) likely catalyzes the oxidative pyran ring formation to yield (+)-stephacidin A (Probable). The FAD-dependent monooxygenase notI is highly similar to notB and is predicted to catalyze a similar conversion from (+)-stephacidin A to (-)-notoamide B via the 2,3-epoxidation of (+)-stephacidin A followed by a pinacol-type rearrangement (Probable). Finally, it remains unclear which enzyme could be responsible for the final hydroxylation steps leading to notoamide A and sclerotiamide (Probable).</text>
</comment>
<comment type="cofactor">
    <cofactor evidence="1">
        <name>FAD</name>
        <dbReference type="ChEBI" id="CHEBI:57692"/>
    </cofactor>
</comment>
<comment type="pathway">
    <text evidence="9">Alkaloid biosynthesis.</text>
</comment>
<comment type="biotechnology">
    <text evidence="4">Notoamides have been shown to exhibit antitumoral activities (PubMed:17304611). Notoamides A-C show moderate cytotoxicity against HeLa and L1210 cells with IC(50) values in the range of 22-52 mg/ml, but the IC(50) value of notoamide D is greater than 100 mg/ml (PubMed:17304611). Moreover, notoamide C induces G2/M-cell cycle arrest at a concentration of 6.3 mg/ml (PubMed:17304611).</text>
</comment>
<comment type="similarity">
    <text evidence="8">Belongs to the paxM FAD-dependent monooxygenase family.</text>
</comment>
<sequence>MAIDGSGVATPAPSGITVIIVGLGPTGLAAAIECHRRGHKVICFEKNPKSYRLGDLISVTGNAVRVLQEWGNGSVIKELQAFQCNLDTLEVYNETGDLKLSAPYNATQAKDEYMLRRSRLLDIFLQHLKSLGVEIHLGIQVADYWETESSAGVTVGGEKIVGDCVVVADGVHSKGRPQVSGEPFALEATDGIAFRAFFNASEISQDPEASWILRDAGEKDCFKTFYGKGLVMMVGTAENHEYVFWSCGHKENVMAHPSSVATVLDLIRDWPVSTRLAPLISKTPGDNCLNQTLYTRPPLKKWVSSNGRMIVLGDAAHPFLPHAGQGANQGIEDGAVLALCLEITSKKDVPLALRVTEKLRYQRVAAIQQRGVEARDQSLNVDWGNGGFSKKLTLHPAWLHDHDCIKQVYEEFDKAADAVTKGHEHTFGGIPVG</sequence>
<accession>E1ACQ4</accession>
<name>NOTI_ASPSM</name>